<sequence length="185" mass="20697">MELLRQGEHLHSTSRSTLESKCRKYKLIMQNDGNLVLYIGSLKSQSDEYCLWSSASCGKGHGPYRLSMQEDGNLVIYDSRNSAIWASGTMGHGVRGHYSMKLRSSGQIVVYDKYKQILYSSKPCTRDHLLSLPCAKPSGHPQSAYPPQQPGYGYPAQPGYPPQPGYPPQHGYPPQHGYPQQPGYY</sequence>
<proteinExistence type="evidence at protein level"/>
<organism>
    <name type="scientific">Dictyostelium discoideum</name>
    <name type="common">Social amoeba</name>
    <dbReference type="NCBI Taxonomy" id="44689"/>
    <lineage>
        <taxon>Eukaryota</taxon>
        <taxon>Amoebozoa</taxon>
        <taxon>Evosea</taxon>
        <taxon>Eumycetozoa</taxon>
        <taxon>Dictyostelia</taxon>
        <taxon>Dictyosteliales</taxon>
        <taxon>Dictyosteliaceae</taxon>
        <taxon>Dictyostelium</taxon>
    </lineage>
</organism>
<keyword id="KW-0009">Actin-binding</keyword>
<keyword id="KW-0963">Cytoplasm</keyword>
<keyword id="KW-0206">Cytoskeleton</keyword>
<keyword id="KW-0903">Direct protein sequencing</keyword>
<keyword id="KW-0333">Golgi apparatus</keyword>
<keyword id="KW-0430">Lectin</keyword>
<keyword id="KW-0472">Membrane</keyword>
<keyword id="KW-1185">Reference proteome</keyword>
<keyword id="KW-0677">Repeat</keyword>
<name>COMI_DICDI</name>
<comment type="function">
    <text>May have a role in cell motility. It has high affinity for both G-actin and F-actin. Binds to vesicle membranes via mannose residues and, by way of its interaction with actin, links these membranes to the cytoskeleton.</text>
</comment>
<comment type="subunit">
    <text>Homodimer in solution.</text>
</comment>
<comment type="subcellular location">
    <subcellularLocation>
        <location>Golgi apparatus membrane</location>
        <topology>Peripheral membrane protein</topology>
    </subcellularLocation>
    <subcellularLocation>
        <location>Endomembrane system</location>
        <topology>Peripheral membrane protein</topology>
    </subcellularLocation>
    <subcellularLocation>
        <location>Cytoplasm</location>
        <location>Cytoskeleton</location>
    </subcellularLocation>
    <text>Primarily on Golgi and vesicle membranes.</text>
</comment>
<comment type="developmental stage">
    <text>Levels of p24 mRNA increase rapidly during early development and then drop sharply after aggregation.</text>
</comment>
<comment type="PTM">
    <text>The N-terminus is blocked.</text>
</comment>
<evidence type="ECO:0000255" key="1">
    <source>
        <dbReference type="PROSITE-ProRule" id="PRU00038"/>
    </source>
</evidence>
<evidence type="ECO:0000256" key="2">
    <source>
        <dbReference type="SAM" id="MobiDB-lite"/>
    </source>
</evidence>
<reference key="1">
    <citation type="journal article" date="1990" name="FEBS Lett.">
        <title>A protein with homology to the C-terminal repeat sequence of Octopus rhodopsin and synaptophysin is a member of a multigene family in Dictyostelium discoideum.</title>
        <authorList>
            <person name="Noegel A.A."/>
            <person name="Gerisch G."/>
            <person name="Lottspeich F."/>
            <person name="Schleicher M."/>
        </authorList>
    </citation>
    <scope>NUCLEOTIDE SEQUENCE [MRNA]</scope>
    <scope>PROTEIN SEQUENCE OF 101-113</scope>
    <source>
        <strain>AX2</strain>
    </source>
</reference>
<reference key="2">
    <citation type="journal article" date="1992" name="Biochem. Cell Biol.">
        <title>Regulation of the gene encoding the p24 actin-binding protein in Dictyostelium discoideum.</title>
        <authorList>
            <person name="Greenwood M.T."/>
            <person name="Tsang A."/>
        </authorList>
    </citation>
    <scope>NUCLEOTIDE SEQUENCE [MRNA]</scope>
    <source>
        <strain>V12M2</strain>
    </source>
</reference>
<reference key="3">
    <citation type="submission" date="2000-07" db="EMBL/GenBank/DDBJ databases">
        <title>The vesicle- and actin-associated protein comitin has a role in phagocytosis and in protection against osmotic stress.</title>
        <authorList>
            <person name="Schreiner T."/>
            <person name="Noegel A.A."/>
        </authorList>
    </citation>
    <scope>NUCLEOTIDE SEQUENCE [GENOMIC DNA]</scope>
</reference>
<reference key="4">
    <citation type="journal article" date="2005" name="Nature">
        <title>The genome of the social amoeba Dictyostelium discoideum.</title>
        <authorList>
            <person name="Eichinger L."/>
            <person name="Pachebat J.A."/>
            <person name="Gloeckner G."/>
            <person name="Rajandream M.A."/>
            <person name="Sucgang R."/>
            <person name="Berriman M."/>
            <person name="Song J."/>
            <person name="Olsen R."/>
            <person name="Szafranski K."/>
            <person name="Xu Q."/>
            <person name="Tunggal B."/>
            <person name="Kummerfeld S."/>
            <person name="Madera M."/>
            <person name="Konfortov B.A."/>
            <person name="Rivero F."/>
            <person name="Bankier A.T."/>
            <person name="Lehmann R."/>
            <person name="Hamlin N."/>
            <person name="Davies R."/>
            <person name="Gaudet P."/>
            <person name="Fey P."/>
            <person name="Pilcher K."/>
            <person name="Chen G."/>
            <person name="Saunders D."/>
            <person name="Sodergren E.J."/>
            <person name="Davis P."/>
            <person name="Kerhornou A."/>
            <person name="Nie X."/>
            <person name="Hall N."/>
            <person name="Anjard C."/>
            <person name="Hemphill L."/>
            <person name="Bason N."/>
            <person name="Farbrother P."/>
            <person name="Desany B."/>
            <person name="Just E."/>
            <person name="Morio T."/>
            <person name="Rost R."/>
            <person name="Churcher C.M."/>
            <person name="Cooper J."/>
            <person name="Haydock S."/>
            <person name="van Driessche N."/>
            <person name="Cronin A."/>
            <person name="Goodhead I."/>
            <person name="Muzny D.M."/>
            <person name="Mourier T."/>
            <person name="Pain A."/>
            <person name="Lu M."/>
            <person name="Harper D."/>
            <person name="Lindsay R."/>
            <person name="Hauser H."/>
            <person name="James K.D."/>
            <person name="Quiles M."/>
            <person name="Madan Babu M."/>
            <person name="Saito T."/>
            <person name="Buchrieser C."/>
            <person name="Wardroper A."/>
            <person name="Felder M."/>
            <person name="Thangavelu M."/>
            <person name="Johnson D."/>
            <person name="Knights A."/>
            <person name="Loulseged H."/>
            <person name="Mungall K.L."/>
            <person name="Oliver K."/>
            <person name="Price C."/>
            <person name="Quail M.A."/>
            <person name="Urushihara H."/>
            <person name="Hernandez J."/>
            <person name="Rabbinowitsch E."/>
            <person name="Steffen D."/>
            <person name="Sanders M."/>
            <person name="Ma J."/>
            <person name="Kohara Y."/>
            <person name="Sharp S."/>
            <person name="Simmonds M.N."/>
            <person name="Spiegler S."/>
            <person name="Tivey A."/>
            <person name="Sugano S."/>
            <person name="White B."/>
            <person name="Walker D."/>
            <person name="Woodward J.R."/>
            <person name="Winckler T."/>
            <person name="Tanaka Y."/>
            <person name="Shaulsky G."/>
            <person name="Schleicher M."/>
            <person name="Weinstock G.M."/>
            <person name="Rosenthal A."/>
            <person name="Cox E.C."/>
            <person name="Chisholm R.L."/>
            <person name="Gibbs R.A."/>
            <person name="Loomis W.F."/>
            <person name="Platzer M."/>
            <person name="Kay R.R."/>
            <person name="Williams J.G."/>
            <person name="Dear P.H."/>
            <person name="Noegel A.A."/>
            <person name="Barrell B.G."/>
            <person name="Kuspa A."/>
        </authorList>
    </citation>
    <scope>NUCLEOTIDE SEQUENCE [LARGE SCALE GENOMIC DNA]</scope>
    <source>
        <strain>AX4</strain>
    </source>
</reference>
<reference key="5">
    <citation type="journal article" date="1996" name="EMBO J.">
        <title>Linking microfilaments to intracellular membranes: the actin-binding and vesicle-associated protein comitin exhibits a mannose-specific lectin activity.</title>
        <authorList>
            <person name="Jung E."/>
            <person name="Fucini P."/>
            <person name="Stewart M."/>
            <person name="Noegel A.A."/>
            <person name="Schleicher M."/>
        </authorList>
    </citation>
    <scope>CHARACTERIZATION</scope>
</reference>
<reference key="6">
    <citation type="journal article" date="2006" name="Mol. Cell. Proteomics">
        <title>Proteomics fingerprinting of phagosome maturation and evidence for the role of a Galpha during uptake.</title>
        <authorList>
            <person name="Gotthardt D."/>
            <person name="Blancheteau V."/>
            <person name="Bosserhoff A."/>
            <person name="Ruppert T."/>
            <person name="Delorenzi M."/>
            <person name="Soldati T."/>
        </authorList>
    </citation>
    <scope>IDENTIFICATION BY MASS SPECTROMETRY [LARGE SCALE ANALYSIS]</scope>
    <source>
        <strain>AX2</strain>
    </source>
</reference>
<feature type="chain" id="PRO_0000206367" description="Comitin">
    <location>
        <begin position="1"/>
        <end position="185"/>
    </location>
</feature>
<feature type="domain" description="Bulb-type lectin" evidence="1">
    <location>
        <begin position="1"/>
        <end position="123"/>
    </location>
</feature>
<feature type="repeat" description="2-1">
    <location>
        <begin position="153"/>
        <end position="158"/>
    </location>
</feature>
<feature type="repeat" description="2-2">
    <location>
        <begin position="159"/>
        <end position="164"/>
    </location>
</feature>
<feature type="repeat" description="2-3">
    <location>
        <begin position="165"/>
        <end position="170"/>
    </location>
</feature>
<feature type="repeat" description="2-4">
    <location>
        <begin position="171"/>
        <end position="176"/>
    </location>
</feature>
<feature type="repeat" description="2-5">
    <location>
        <begin position="177"/>
        <end position="182"/>
    </location>
</feature>
<feature type="region of interest" description="Disordered" evidence="2">
    <location>
        <begin position="138"/>
        <end position="185"/>
    </location>
</feature>
<feature type="region of interest" description="5 X 6 AA tandem repeats of G-Y-P-X-Q-[PH]">
    <location>
        <begin position="153"/>
        <end position="182"/>
    </location>
</feature>
<feature type="compositionally biased region" description="Low complexity" evidence="2">
    <location>
        <begin position="141"/>
        <end position="157"/>
    </location>
</feature>
<feature type="compositionally biased region" description="Pro residues" evidence="2">
    <location>
        <begin position="158"/>
        <end position="171"/>
    </location>
</feature>
<feature type="compositionally biased region" description="Low complexity" evidence="2">
    <location>
        <begin position="172"/>
        <end position="185"/>
    </location>
</feature>
<dbReference type="EMBL" id="X54016">
    <property type="protein sequence ID" value="CAA37963.1"/>
    <property type="molecule type" value="mRNA"/>
</dbReference>
<dbReference type="EMBL" id="X54062">
    <property type="protein sequence ID" value="CAA37997.1"/>
    <property type="molecule type" value="mRNA"/>
</dbReference>
<dbReference type="EMBL" id="AY007806">
    <property type="protein sequence ID" value="AAG32535.1"/>
    <property type="molecule type" value="Genomic_DNA"/>
</dbReference>
<dbReference type="EMBL" id="AAFI02000147">
    <property type="protein sequence ID" value="EAL62617.1"/>
    <property type="molecule type" value="Genomic_DNA"/>
</dbReference>
<dbReference type="PIR" id="S10711">
    <property type="entry name" value="S21366"/>
</dbReference>
<dbReference type="RefSeq" id="XP_636121.1">
    <property type="nucleotide sequence ID" value="XM_631029.1"/>
</dbReference>
<dbReference type="SMR" id="Q03380"/>
<dbReference type="FunCoup" id="Q03380">
    <property type="interactions" value="712"/>
</dbReference>
<dbReference type="STRING" id="44689.Q03380"/>
<dbReference type="PaxDb" id="44689-DDB0219923"/>
<dbReference type="EnsemblProtists" id="EAL62617">
    <property type="protein sequence ID" value="EAL62617"/>
    <property type="gene ID" value="DDB_G0289599"/>
</dbReference>
<dbReference type="GeneID" id="8627224"/>
<dbReference type="KEGG" id="ddi:DDB_G0289599"/>
<dbReference type="dictyBase" id="DDB_G0289599">
    <property type="gene designation" value="comA"/>
</dbReference>
<dbReference type="VEuPathDB" id="AmoebaDB:DDB_G0289599"/>
<dbReference type="eggNOG" id="ENOG502RSSN">
    <property type="taxonomic scope" value="Eukaryota"/>
</dbReference>
<dbReference type="HOGENOM" id="CLU_1463829_0_0_1"/>
<dbReference type="InParanoid" id="Q03380"/>
<dbReference type="OMA" id="HYPANSL"/>
<dbReference type="PhylomeDB" id="Q03380"/>
<dbReference type="PRO" id="PR:Q03380"/>
<dbReference type="Proteomes" id="UP000002195">
    <property type="component" value="Chromosome 5"/>
</dbReference>
<dbReference type="GO" id="GO:0005911">
    <property type="term" value="C:cell-cell junction"/>
    <property type="evidence" value="ECO:0000314"/>
    <property type="project" value="dictyBase"/>
</dbReference>
<dbReference type="GO" id="GO:0005856">
    <property type="term" value="C:cytoskeleton"/>
    <property type="evidence" value="ECO:0007669"/>
    <property type="project" value="UniProtKB-SubCell"/>
</dbReference>
<dbReference type="GO" id="GO:0005768">
    <property type="term" value="C:endosome"/>
    <property type="evidence" value="ECO:0000314"/>
    <property type="project" value="dictyBase"/>
</dbReference>
<dbReference type="GO" id="GO:0005794">
    <property type="term" value="C:Golgi apparatus"/>
    <property type="evidence" value="ECO:0000314"/>
    <property type="project" value="dictyBase"/>
</dbReference>
<dbReference type="GO" id="GO:0000139">
    <property type="term" value="C:Golgi membrane"/>
    <property type="evidence" value="ECO:0007669"/>
    <property type="project" value="UniProtKB-SubCell"/>
</dbReference>
<dbReference type="GO" id="GO:0030660">
    <property type="term" value="C:Golgi-associated vesicle membrane"/>
    <property type="evidence" value="ECO:0000314"/>
    <property type="project" value="dictyBase"/>
</dbReference>
<dbReference type="GO" id="GO:0005811">
    <property type="term" value="C:lipid droplet"/>
    <property type="evidence" value="ECO:0007005"/>
    <property type="project" value="dictyBase"/>
</dbReference>
<dbReference type="GO" id="GO:0045335">
    <property type="term" value="C:phagocytic vesicle"/>
    <property type="evidence" value="ECO:0000314"/>
    <property type="project" value="dictyBase"/>
</dbReference>
<dbReference type="GO" id="GO:0030867">
    <property type="term" value="C:rough endoplasmic reticulum membrane"/>
    <property type="evidence" value="ECO:0000314"/>
    <property type="project" value="dictyBase"/>
</dbReference>
<dbReference type="GO" id="GO:0051015">
    <property type="term" value="F:actin filament binding"/>
    <property type="evidence" value="ECO:0000314"/>
    <property type="project" value="dictyBase"/>
</dbReference>
<dbReference type="GO" id="GO:0003785">
    <property type="term" value="F:actin monomer binding"/>
    <property type="evidence" value="ECO:0000314"/>
    <property type="project" value="dictyBase"/>
</dbReference>
<dbReference type="GO" id="GO:0005537">
    <property type="term" value="F:D-mannose binding"/>
    <property type="evidence" value="ECO:0000303"/>
    <property type="project" value="dictyBase"/>
</dbReference>
<dbReference type="GO" id="GO:0042802">
    <property type="term" value="F:identical protein binding"/>
    <property type="evidence" value="ECO:0000353"/>
    <property type="project" value="dictyBase"/>
</dbReference>
<dbReference type="GO" id="GO:0051017">
    <property type="term" value="P:actin filament bundle assembly"/>
    <property type="evidence" value="ECO:0000314"/>
    <property type="project" value="dictyBase"/>
</dbReference>
<dbReference type="GO" id="GO:0042742">
    <property type="term" value="P:defense response to bacterium"/>
    <property type="evidence" value="ECO:0000315"/>
    <property type="project" value="dictyBase"/>
</dbReference>
<dbReference type="GO" id="GO:0006972">
    <property type="term" value="P:hyperosmotic response"/>
    <property type="evidence" value="ECO:0000315"/>
    <property type="project" value="dictyBase"/>
</dbReference>
<dbReference type="GO" id="GO:0006909">
    <property type="term" value="P:phagocytosis"/>
    <property type="evidence" value="ECO:0000315"/>
    <property type="project" value="dictyBase"/>
</dbReference>
<dbReference type="GO" id="GO:0009617">
    <property type="term" value="P:response to bacterium"/>
    <property type="evidence" value="ECO:0007007"/>
    <property type="project" value="dictyBase"/>
</dbReference>
<dbReference type="GO" id="GO:0051591">
    <property type="term" value="P:response to cAMP"/>
    <property type="evidence" value="ECO:0000314"/>
    <property type="project" value="dictyBase"/>
</dbReference>
<dbReference type="GO" id="GO:0046898">
    <property type="term" value="P:response to cycloheximide"/>
    <property type="evidence" value="ECO:0000314"/>
    <property type="project" value="dictyBase"/>
</dbReference>
<dbReference type="GO" id="GO:0051707">
    <property type="term" value="P:response to other organism"/>
    <property type="evidence" value="ECO:0000304"/>
    <property type="project" value="dictyBase"/>
</dbReference>
<dbReference type="CDD" id="cd00028">
    <property type="entry name" value="B_lectin"/>
    <property type="match status" value="1"/>
</dbReference>
<dbReference type="Gene3D" id="2.90.10.10">
    <property type="entry name" value="Bulb-type lectin domain"/>
    <property type="match status" value="2"/>
</dbReference>
<dbReference type="InterPro" id="IPR001480">
    <property type="entry name" value="Bulb-type_lectin_dom"/>
</dbReference>
<dbReference type="InterPro" id="IPR036426">
    <property type="entry name" value="Bulb-type_lectin_dom_sf"/>
</dbReference>
<dbReference type="SMART" id="SM00108">
    <property type="entry name" value="B_lectin"/>
    <property type="match status" value="1"/>
</dbReference>
<dbReference type="SUPFAM" id="SSF51110">
    <property type="entry name" value="alpha-D-mannose-specific plant lectins"/>
    <property type="match status" value="1"/>
</dbReference>
<dbReference type="PROSITE" id="PS50927">
    <property type="entry name" value="BULB_LECTIN"/>
    <property type="match status" value="1"/>
</dbReference>
<gene>
    <name type="primary">comA</name>
    <name type="synonym">capA</name>
    <name type="synonym">capC</name>
    <name type="ORF">DDB_G0289599</name>
</gene>
<protein>
    <recommendedName>
        <fullName>Comitin</fullName>
    </recommendedName>
    <alternativeName>
        <fullName>24 kDa actin-binding protein</fullName>
    </alternativeName>
    <alternativeName>
        <fullName>CABP1-related protein p24</fullName>
    </alternativeName>
</protein>
<accession>Q03380</accession>
<accession>Q54HA3</accession>